<sequence>MQKLLLAVLFFSLLAIATARPKYHKQGRRKGDACRLHCLFDNIVCETPCRVLFRSRFSYHVCARDCRKDRVDCYIGCKNIDANPKAEAEPGSLDKEAGTKGEKEKNGKKEKKEKKEKGEYAIGNAESGTGSSGGSNKTHDDDDDDHDDVYENDDENEE</sequence>
<proteinExistence type="evidence at protein level"/>
<evidence type="ECO:0000255" key="1"/>
<evidence type="ECO:0000256" key="2">
    <source>
        <dbReference type="SAM" id="MobiDB-lite"/>
    </source>
</evidence>
<evidence type="ECO:0000269" key="3">
    <source>
    </source>
</evidence>
<evidence type="ECO:0000269" key="4">
    <source>
    </source>
</evidence>
<evidence type="ECO:0000305" key="5"/>
<reference evidence="5" key="1">
    <citation type="journal article" date="2010" name="Mol. Biol. Evol.">
        <title>Parallel evolution of nacre building gene sets in molluscs.</title>
        <authorList>
            <person name="Jackson D.J."/>
            <person name="McDougall C."/>
            <person name="Woodcroft B."/>
            <person name="Moase P."/>
            <person name="Rose R.A."/>
            <person name="Kube M."/>
            <person name="Reinhardt R."/>
            <person name="Rokhsar D.S."/>
            <person name="Montagnani C."/>
            <person name="Joubert C."/>
            <person name="Piquemal D."/>
            <person name="Degnan B.M."/>
        </authorList>
    </citation>
    <scope>NUCLEOTIDE SEQUENCE [MRNA]</scope>
    <scope>IDENTIFICATION</scope>
    <source>
        <tissue evidence="3">Mantle</tissue>
    </source>
</reference>
<reference key="2">
    <citation type="journal article" date="2012" name="Proc. Natl. Acad. Sci. U.S.A.">
        <title>Different secretory repertoires control the biomineralization processes of prism and nacre deposition of the pearl oyster shell.</title>
        <authorList>
            <person name="Marie B."/>
            <person name="Joubert C."/>
            <person name="Tayale A."/>
            <person name="Zanella-Cleon I."/>
            <person name="Belliard C."/>
            <person name="Piquemal D."/>
            <person name="Cochennec-Laureau N."/>
            <person name="Marin F."/>
            <person name="Gueguen Y."/>
            <person name="Montagnani C."/>
        </authorList>
    </citation>
    <scope>PROTEIN SEQUENCE OF 36-50; 57-64; 69-78 AND 86-95</scope>
    <scope>SUBCELLULAR LOCATION</scope>
    <scope>TISSUE SPECIFICITY</scope>
    <source>
        <tissue>Shell</tissue>
    </source>
</reference>
<feature type="signal peptide" evidence="1">
    <location>
        <begin position="1"/>
        <end position="19"/>
    </location>
</feature>
<feature type="chain" id="PRO_0000413078" description="Uncharacterized shell protein 1" evidence="1">
    <location>
        <begin position="20"/>
        <end position="158"/>
    </location>
</feature>
<feature type="region of interest" description="Disordered" evidence="2">
    <location>
        <begin position="82"/>
        <end position="158"/>
    </location>
</feature>
<feature type="compositionally biased region" description="Basic and acidic residues" evidence="2">
    <location>
        <begin position="84"/>
        <end position="107"/>
    </location>
</feature>
<feature type="compositionally biased region" description="Acidic residues" evidence="2">
    <location>
        <begin position="141"/>
        <end position="158"/>
    </location>
</feature>
<comment type="subcellular location">
    <subcellularLocation>
        <location evidence="4">Secreted</location>
    </subcellularLocation>
</comment>
<comment type="tissue specificity">
    <text evidence="4">Prismatic layer of shell (at protein level). Expressed primarily in the mantle with highest level in the mantle edge and lower level in the mantle pallium.</text>
</comment>
<dbReference type="EMBL" id="GT280356">
    <property type="status" value="NOT_ANNOTATED_CDS"/>
    <property type="molecule type" value="mRNA"/>
</dbReference>
<dbReference type="GO" id="GO:0005576">
    <property type="term" value="C:extracellular region"/>
    <property type="evidence" value="ECO:0007669"/>
    <property type="project" value="UniProtKB-SubCell"/>
</dbReference>
<name>USP1_PINMA</name>
<keyword id="KW-0903">Direct protein sequencing</keyword>
<keyword id="KW-0964">Secreted</keyword>
<keyword id="KW-0732">Signal</keyword>
<accession>P86958</accession>
<protein>
    <recommendedName>
        <fullName>Uncharacterized shell protein 1</fullName>
    </recommendedName>
    <alternativeName>
        <fullName>Prism uncharacterized shell protein 2</fullName>
        <shortName>PUSP2</shortName>
    </alternativeName>
</protein>
<organism>
    <name type="scientific">Pinctada maxima</name>
    <name type="common">Silver-lipped pearl oyster</name>
    <name type="synonym">White-lipped pearl oyster</name>
    <dbReference type="NCBI Taxonomy" id="104660"/>
    <lineage>
        <taxon>Eukaryota</taxon>
        <taxon>Metazoa</taxon>
        <taxon>Spiralia</taxon>
        <taxon>Lophotrochozoa</taxon>
        <taxon>Mollusca</taxon>
        <taxon>Bivalvia</taxon>
        <taxon>Autobranchia</taxon>
        <taxon>Pteriomorphia</taxon>
        <taxon>Pterioida</taxon>
        <taxon>Pterioidea</taxon>
        <taxon>Pteriidae</taxon>
        <taxon>Pinctada</taxon>
    </lineage>
</organism>